<feature type="chain" id="PRO_1000185960" description="3-ketoacyl-CoA thiolase">
    <location>
        <begin position="1"/>
        <end position="436"/>
    </location>
</feature>
<feature type="active site" description="Acyl-thioester intermediate" evidence="1">
    <location>
        <position position="99"/>
    </location>
</feature>
<feature type="active site" description="Proton acceptor" evidence="1">
    <location>
        <position position="392"/>
    </location>
</feature>
<feature type="active site" description="Proton acceptor" evidence="1">
    <location>
        <position position="422"/>
    </location>
</feature>
<evidence type="ECO:0000255" key="1">
    <source>
        <dbReference type="HAMAP-Rule" id="MF_01618"/>
    </source>
</evidence>
<organism>
    <name type="scientific">Escherichia coli O157:H7 (strain EC4115 / EHEC)</name>
    <dbReference type="NCBI Taxonomy" id="444450"/>
    <lineage>
        <taxon>Bacteria</taxon>
        <taxon>Pseudomonadati</taxon>
        <taxon>Pseudomonadota</taxon>
        <taxon>Gammaproteobacteria</taxon>
        <taxon>Enterobacterales</taxon>
        <taxon>Enterobacteriaceae</taxon>
        <taxon>Escherichia</taxon>
    </lineage>
</organism>
<proteinExistence type="inferred from homology"/>
<accession>B5YXY5</accession>
<name>FADI_ECO5E</name>
<protein>
    <recommendedName>
        <fullName evidence="1">3-ketoacyl-CoA thiolase</fullName>
        <ecNumber evidence="1">2.3.1.16</ecNumber>
    </recommendedName>
    <alternativeName>
        <fullName evidence="1">ACSs</fullName>
    </alternativeName>
    <alternativeName>
        <fullName evidence="1">Acetyl-CoA acyltransferase</fullName>
    </alternativeName>
    <alternativeName>
        <fullName evidence="1">Acyl-CoA ligase</fullName>
    </alternativeName>
    <alternativeName>
        <fullName evidence="1">Beta-ketothiolase</fullName>
    </alternativeName>
    <alternativeName>
        <fullName evidence="1">Fatty acid oxidation complex subunit beta</fullName>
    </alternativeName>
</protein>
<keyword id="KW-0012">Acyltransferase</keyword>
<keyword id="KW-0963">Cytoplasm</keyword>
<keyword id="KW-0276">Fatty acid metabolism</keyword>
<keyword id="KW-0442">Lipid degradation</keyword>
<keyword id="KW-0443">Lipid metabolism</keyword>
<keyword id="KW-0808">Transferase</keyword>
<gene>
    <name evidence="1" type="primary">fadI</name>
    <name type="ordered locus">ECH74115_3485</name>
</gene>
<sequence>MGQVLPLVTRQGDRIAIVSGLRTPFARQATAFHGIPAVDLGKMVVGELLARSEIPAEVIEQLVFGQVVQMPEAPNIAREIVLGTGMNVHTDAYSVSRACATSFQAVANVVESLMAGTIRAGIAGGADSSSVLPIGVSKKLARVLVDVNKARTMSQRLKLFSRLRLRDLMPVPPAVAEYSTGLRMGDTAEQMAKTYGITREQQDALAHRSHQRAAQAWSDGKLKEEVMTAFIPPYKQLLAEDNNIRGNSSLADFAKLRPAFDRKHGTVTAANSTPLTDGAAAVILMTESRAKELGLVPLGYLRSYAFTAIDVWQDMLLGPAWSTPLALERAGLTMADLTLIDMHEAFAAQTLANIQLLGSERFAREALGRAHATGEVDDSKFNVLGGSIAYGHPFAATGARMITQTLHELRRRGGGFGLVTACAAGGLGAAMVLEAE</sequence>
<dbReference type="EC" id="2.3.1.16" evidence="1"/>
<dbReference type="EMBL" id="CP001164">
    <property type="protein sequence ID" value="ACI39254.1"/>
    <property type="molecule type" value="Genomic_DNA"/>
</dbReference>
<dbReference type="RefSeq" id="WP_000531969.1">
    <property type="nucleotide sequence ID" value="NC_011353.1"/>
</dbReference>
<dbReference type="SMR" id="B5YXY5"/>
<dbReference type="KEGG" id="ecf:ECH74115_3485"/>
<dbReference type="HOGENOM" id="CLU_031026_2_0_6"/>
<dbReference type="UniPathway" id="UPA00659"/>
<dbReference type="GO" id="GO:0005829">
    <property type="term" value="C:cytosol"/>
    <property type="evidence" value="ECO:0007669"/>
    <property type="project" value="TreeGrafter"/>
</dbReference>
<dbReference type="GO" id="GO:0003988">
    <property type="term" value="F:acetyl-CoA C-acyltransferase activity"/>
    <property type="evidence" value="ECO:0007669"/>
    <property type="project" value="UniProtKB-UniRule"/>
</dbReference>
<dbReference type="GO" id="GO:0006635">
    <property type="term" value="P:fatty acid beta-oxidation"/>
    <property type="evidence" value="ECO:0007669"/>
    <property type="project" value="UniProtKB-UniRule"/>
</dbReference>
<dbReference type="CDD" id="cd00751">
    <property type="entry name" value="thiolase"/>
    <property type="match status" value="1"/>
</dbReference>
<dbReference type="FunFam" id="3.40.47.10:FF:000011">
    <property type="entry name" value="3-ketoacyl-CoA thiolase"/>
    <property type="match status" value="1"/>
</dbReference>
<dbReference type="Gene3D" id="3.40.47.10">
    <property type="match status" value="1"/>
</dbReference>
<dbReference type="HAMAP" id="MF_01618">
    <property type="entry name" value="FadI"/>
    <property type="match status" value="1"/>
</dbReference>
<dbReference type="InterPro" id="IPR012806">
    <property type="entry name" value="Ac-CoA_C-AcTrfase_FadI"/>
</dbReference>
<dbReference type="InterPro" id="IPR002155">
    <property type="entry name" value="Thiolase"/>
</dbReference>
<dbReference type="InterPro" id="IPR016039">
    <property type="entry name" value="Thiolase-like"/>
</dbReference>
<dbReference type="InterPro" id="IPR020615">
    <property type="entry name" value="Thiolase_acyl_enz_int_AS"/>
</dbReference>
<dbReference type="InterPro" id="IPR020610">
    <property type="entry name" value="Thiolase_AS"/>
</dbReference>
<dbReference type="InterPro" id="IPR020617">
    <property type="entry name" value="Thiolase_C"/>
</dbReference>
<dbReference type="InterPro" id="IPR020613">
    <property type="entry name" value="Thiolase_CS"/>
</dbReference>
<dbReference type="InterPro" id="IPR020616">
    <property type="entry name" value="Thiolase_N"/>
</dbReference>
<dbReference type="NCBIfam" id="TIGR01930">
    <property type="entry name" value="AcCoA-C-Actrans"/>
    <property type="match status" value="1"/>
</dbReference>
<dbReference type="NCBIfam" id="TIGR02446">
    <property type="entry name" value="FadI"/>
    <property type="match status" value="1"/>
</dbReference>
<dbReference type="NCBIfam" id="NF006516">
    <property type="entry name" value="PRK08963.1"/>
    <property type="match status" value="1"/>
</dbReference>
<dbReference type="PANTHER" id="PTHR18919:SF107">
    <property type="entry name" value="ACETYL-COA ACETYLTRANSFERASE, CYTOSOLIC"/>
    <property type="match status" value="1"/>
</dbReference>
<dbReference type="PANTHER" id="PTHR18919">
    <property type="entry name" value="ACETYL-COA C-ACYLTRANSFERASE"/>
    <property type="match status" value="1"/>
</dbReference>
<dbReference type="Pfam" id="PF02803">
    <property type="entry name" value="Thiolase_C"/>
    <property type="match status" value="1"/>
</dbReference>
<dbReference type="Pfam" id="PF00108">
    <property type="entry name" value="Thiolase_N"/>
    <property type="match status" value="1"/>
</dbReference>
<dbReference type="PIRSF" id="PIRSF000429">
    <property type="entry name" value="Ac-CoA_Ac_transf"/>
    <property type="match status" value="1"/>
</dbReference>
<dbReference type="SUPFAM" id="SSF53901">
    <property type="entry name" value="Thiolase-like"/>
    <property type="match status" value="2"/>
</dbReference>
<dbReference type="PROSITE" id="PS00098">
    <property type="entry name" value="THIOLASE_1"/>
    <property type="match status" value="1"/>
</dbReference>
<dbReference type="PROSITE" id="PS00737">
    <property type="entry name" value="THIOLASE_2"/>
    <property type="match status" value="1"/>
</dbReference>
<dbReference type="PROSITE" id="PS00099">
    <property type="entry name" value="THIOLASE_3"/>
    <property type="match status" value="1"/>
</dbReference>
<reference key="1">
    <citation type="journal article" date="2011" name="Proc. Natl. Acad. Sci. U.S.A.">
        <title>Genomic anatomy of Escherichia coli O157:H7 outbreaks.</title>
        <authorList>
            <person name="Eppinger M."/>
            <person name="Mammel M.K."/>
            <person name="Leclerc J.E."/>
            <person name="Ravel J."/>
            <person name="Cebula T.A."/>
        </authorList>
    </citation>
    <scope>NUCLEOTIDE SEQUENCE [LARGE SCALE GENOMIC DNA]</scope>
    <source>
        <strain>EC4115 / EHEC</strain>
    </source>
</reference>
<comment type="function">
    <text evidence="1">Catalyzes the final step of fatty acid oxidation in which acetyl-CoA is released and the CoA ester of a fatty acid two carbons shorter is formed.</text>
</comment>
<comment type="catalytic activity">
    <reaction evidence="1">
        <text>an acyl-CoA + acetyl-CoA = a 3-oxoacyl-CoA + CoA</text>
        <dbReference type="Rhea" id="RHEA:21564"/>
        <dbReference type="ChEBI" id="CHEBI:57287"/>
        <dbReference type="ChEBI" id="CHEBI:57288"/>
        <dbReference type="ChEBI" id="CHEBI:58342"/>
        <dbReference type="ChEBI" id="CHEBI:90726"/>
        <dbReference type="EC" id="2.3.1.16"/>
    </reaction>
</comment>
<comment type="pathway">
    <text evidence="1">Lipid metabolism; fatty acid beta-oxidation.</text>
</comment>
<comment type="subunit">
    <text evidence="1">Heterotetramer of two alpha chains (FadJ) and two beta chains (FadI).</text>
</comment>
<comment type="subcellular location">
    <subcellularLocation>
        <location evidence="1">Cytoplasm</location>
    </subcellularLocation>
</comment>
<comment type="similarity">
    <text evidence="1">Belongs to the thiolase-like superfamily. Thiolase family.</text>
</comment>